<organism>
    <name type="scientific">Mus musculus</name>
    <name type="common">Mouse</name>
    <dbReference type="NCBI Taxonomy" id="10090"/>
    <lineage>
        <taxon>Eukaryota</taxon>
        <taxon>Metazoa</taxon>
        <taxon>Chordata</taxon>
        <taxon>Craniata</taxon>
        <taxon>Vertebrata</taxon>
        <taxon>Euteleostomi</taxon>
        <taxon>Mammalia</taxon>
        <taxon>Eutheria</taxon>
        <taxon>Euarchontoglires</taxon>
        <taxon>Glires</taxon>
        <taxon>Rodentia</taxon>
        <taxon>Myomorpha</taxon>
        <taxon>Muroidea</taxon>
        <taxon>Muridae</taxon>
        <taxon>Murinae</taxon>
        <taxon>Mus</taxon>
        <taxon>Mus</taxon>
    </lineage>
</organism>
<evidence type="ECO:0000250" key="1">
    <source>
        <dbReference type="UniProtKB" id="A0A8I3PI99"/>
    </source>
</evidence>
<evidence type="ECO:0000250" key="2">
    <source>
        <dbReference type="UniProtKB" id="C5HGF3"/>
    </source>
</evidence>
<evidence type="ECO:0000250" key="3">
    <source>
        <dbReference type="UniProtKB" id="Q9UM00"/>
    </source>
</evidence>
<evidence type="ECO:0000255" key="4"/>
<evidence type="ECO:0000269" key="5">
    <source>
    </source>
</evidence>
<evidence type="ECO:0000269" key="6">
    <source>
    </source>
</evidence>
<evidence type="ECO:0000269" key="7">
    <source>
    </source>
</evidence>
<evidence type="ECO:0000305" key="8"/>
<evidence type="ECO:0000312" key="9">
    <source>
        <dbReference type="MGI" id="MGI:1921173"/>
    </source>
</evidence>
<keyword id="KW-0106">Calcium</keyword>
<keyword id="KW-0107">Calcium channel</keyword>
<keyword id="KW-0109">Calcium transport</keyword>
<keyword id="KW-0175">Coiled coil</keyword>
<keyword id="KW-0256">Endoplasmic reticulum</keyword>
<keyword id="KW-0333">Golgi apparatus</keyword>
<keyword id="KW-0407">Ion channel</keyword>
<keyword id="KW-0406">Ion transport</keyword>
<keyword id="KW-0472">Membrane</keyword>
<keyword id="KW-0496">Mitochondrion</keyword>
<keyword id="KW-0597">Phosphoprotein</keyword>
<keyword id="KW-1185">Reference proteome</keyword>
<keyword id="KW-0812">Transmembrane</keyword>
<keyword id="KW-1133">Transmembrane helix</keyword>
<keyword id="KW-0813">Transport</keyword>
<sequence length="188" mass="21175">MSTMFADTLLIVFISVCTALLAEGITWVLVYRTDKYKRLKAEVEKQSKKLEKKKETITESAGRQQKKKIERQEEKLKNNNRDLSMVRMKSMFAIGFCFTALMGMFNSIFDGRVVAKLPFTPLSYIQGLSHRNLLGDDTTDCSFIFLYILCTMSIRQNIQKILGLAPSRAATKQAGGFLGPPPPSGKFS</sequence>
<protein>
    <recommendedName>
        <fullName evidence="3">Calcium load-activated calcium channel</fullName>
        <shortName evidence="3">CLAC channel</shortName>
    </recommendedName>
    <alternativeName>
        <fullName evidence="8">GEL complex subunit TMCO1</fullName>
    </alternativeName>
    <alternativeName>
        <fullName evidence="8">Transmembrane and coiled-coil domain-containing protein 1</fullName>
    </alternativeName>
</protein>
<name>TMCO1_MOUSE</name>
<proteinExistence type="evidence at protein level"/>
<feature type="chain" id="PRO_0000244077" description="Calcium load-activated calcium channel">
    <location>
        <begin position="1"/>
        <end position="188"/>
    </location>
</feature>
<feature type="topological domain" description="Lumenal" evidence="8">
    <location>
        <begin position="1"/>
        <end position="4"/>
    </location>
</feature>
<feature type="transmembrane region" description="Helical" evidence="1">
    <location>
        <begin position="5"/>
        <end position="32"/>
    </location>
</feature>
<feature type="topological domain" description="Cytoplasmic" evidence="8">
    <location>
        <begin position="33"/>
        <end position="86"/>
    </location>
</feature>
<feature type="transmembrane region" description="Helical" evidence="1">
    <location>
        <begin position="87"/>
        <end position="106"/>
    </location>
</feature>
<feature type="topological domain" description="Lumenal" evidence="8">
    <location>
        <begin position="107"/>
        <end position="120"/>
    </location>
</feature>
<feature type="intramembrane region" evidence="1">
    <location>
        <begin position="121"/>
        <end position="130"/>
    </location>
</feature>
<feature type="topological domain" description="Lumenal" evidence="8">
    <location>
        <begin position="131"/>
        <end position="140"/>
    </location>
</feature>
<feature type="transmembrane region" description="Helical" evidence="1">
    <location>
        <begin position="141"/>
        <end position="162"/>
    </location>
</feature>
<feature type="topological domain" description="Cytoplasmic" evidence="8">
    <location>
        <begin position="163"/>
        <end position="188"/>
    </location>
</feature>
<feature type="coiled-coil region" evidence="4">
    <location>
        <begin position="32"/>
        <end position="89"/>
    </location>
</feature>
<feature type="modified residue" description="Phosphoserine" evidence="3">
    <location>
        <position position="60"/>
    </location>
</feature>
<feature type="modified residue" description="Phosphoserine" evidence="3">
    <location>
        <position position="188"/>
    </location>
</feature>
<dbReference type="EMBL" id="AK037709">
    <property type="protein sequence ID" value="BAC29856.1"/>
    <property type="molecule type" value="mRNA"/>
</dbReference>
<dbReference type="EMBL" id="AK162344">
    <property type="protein sequence ID" value="BAE36865.1"/>
    <property type="molecule type" value="mRNA"/>
</dbReference>
<dbReference type="EMBL" id="BC011457">
    <property type="protein sequence ID" value="AAH11457.1"/>
    <property type="molecule type" value="mRNA"/>
</dbReference>
<dbReference type="EMBL" id="BC019761">
    <property type="protein sequence ID" value="AAH19761.1"/>
    <property type="molecule type" value="mRNA"/>
</dbReference>
<dbReference type="EMBL" id="BC020098">
    <property type="protein sequence ID" value="AAH20098.1"/>
    <property type="molecule type" value="mRNA"/>
</dbReference>
<dbReference type="CCDS" id="CCDS15456.1"/>
<dbReference type="RefSeq" id="NP_001034572.1">
    <property type="nucleotide sequence ID" value="NM_001039483.1"/>
</dbReference>
<dbReference type="SMR" id="Q921L3"/>
<dbReference type="BioGRID" id="213130">
    <property type="interactions" value="6"/>
</dbReference>
<dbReference type="FunCoup" id="Q921L3">
    <property type="interactions" value="2633"/>
</dbReference>
<dbReference type="STRING" id="10090.ENSMUSP00000142042"/>
<dbReference type="iPTMnet" id="Q921L3"/>
<dbReference type="PhosphoSitePlus" id="Q921L3"/>
<dbReference type="SwissPalm" id="Q921L3"/>
<dbReference type="jPOST" id="Q921L3"/>
<dbReference type="PaxDb" id="10090-ENSMUSP00000095081"/>
<dbReference type="ProteomicsDB" id="259473"/>
<dbReference type="Pumba" id="Q921L3"/>
<dbReference type="Antibodypedia" id="34332">
    <property type="antibodies" value="54 antibodies from 16 providers"/>
</dbReference>
<dbReference type="Ensembl" id="ENSMUST00000097473.10">
    <property type="protein sequence ID" value="ENSMUSP00000095081.5"/>
    <property type="gene ID" value="ENSMUSG00000052428.11"/>
</dbReference>
<dbReference type="Ensembl" id="ENSMUST00000195015.6">
    <property type="protein sequence ID" value="ENSMUSP00000142042.2"/>
    <property type="gene ID" value="ENSMUSG00000052428.11"/>
</dbReference>
<dbReference type="GeneID" id="68944"/>
<dbReference type="KEGG" id="mmu:68944"/>
<dbReference type="UCSC" id="uc007dkv.1">
    <property type="organism name" value="mouse"/>
</dbReference>
<dbReference type="AGR" id="MGI:1921173"/>
<dbReference type="CTD" id="54499"/>
<dbReference type="MGI" id="MGI:1921173">
    <property type="gene designation" value="Tmco1"/>
</dbReference>
<dbReference type="VEuPathDB" id="HostDB:ENSMUSG00000052428"/>
<dbReference type="eggNOG" id="KOG3312">
    <property type="taxonomic scope" value="Eukaryota"/>
</dbReference>
<dbReference type="GeneTree" id="ENSGT00390000002659"/>
<dbReference type="HOGENOM" id="CLU_081121_0_0_1"/>
<dbReference type="InParanoid" id="Q921L3"/>
<dbReference type="OMA" id="GMFGDFK"/>
<dbReference type="OrthoDB" id="64905at9989"/>
<dbReference type="PhylomeDB" id="Q921L3"/>
<dbReference type="TreeFam" id="TF315045"/>
<dbReference type="BioGRID-ORCS" id="68944">
    <property type="hits" value="4 hits in 76 CRISPR screens"/>
</dbReference>
<dbReference type="ChiTaRS" id="Tmco1">
    <property type="organism name" value="mouse"/>
</dbReference>
<dbReference type="PRO" id="PR:Q921L3"/>
<dbReference type="Proteomes" id="UP000000589">
    <property type="component" value="Chromosome 1"/>
</dbReference>
<dbReference type="RNAct" id="Q921L3">
    <property type="molecule type" value="protein"/>
</dbReference>
<dbReference type="Bgee" id="ENSMUSG00000052428">
    <property type="expression patterns" value="Expressed in right kidney and 266 other cell types or tissues"/>
</dbReference>
<dbReference type="ExpressionAtlas" id="Q921L3">
    <property type="expression patterns" value="baseline and differential"/>
</dbReference>
<dbReference type="GO" id="GO:0005789">
    <property type="term" value="C:endoplasmic reticulum membrane"/>
    <property type="evidence" value="ECO:0000250"/>
    <property type="project" value="UniProtKB"/>
</dbReference>
<dbReference type="GO" id="GO:0000139">
    <property type="term" value="C:Golgi membrane"/>
    <property type="evidence" value="ECO:0007669"/>
    <property type="project" value="UniProtKB-SubCell"/>
</dbReference>
<dbReference type="GO" id="GO:0031966">
    <property type="term" value="C:mitochondrial membrane"/>
    <property type="evidence" value="ECO:0007669"/>
    <property type="project" value="UniProtKB-SubCell"/>
</dbReference>
<dbReference type="GO" id="GO:0160064">
    <property type="term" value="C:multi-pass translocon complex"/>
    <property type="evidence" value="ECO:0000250"/>
    <property type="project" value="UniProtKB"/>
</dbReference>
<dbReference type="GO" id="GO:0005262">
    <property type="term" value="F:calcium channel activity"/>
    <property type="evidence" value="ECO:0000250"/>
    <property type="project" value="UniProtKB"/>
</dbReference>
<dbReference type="GO" id="GO:0043022">
    <property type="term" value="F:ribosome binding"/>
    <property type="evidence" value="ECO:0000250"/>
    <property type="project" value="UniProtKB"/>
</dbReference>
<dbReference type="GO" id="GO:0070588">
    <property type="term" value="P:calcium ion transmembrane transport"/>
    <property type="evidence" value="ECO:0000315"/>
    <property type="project" value="UniProtKB"/>
</dbReference>
<dbReference type="GO" id="GO:0032469">
    <property type="term" value="P:endoplasmic reticulum calcium ion homeostasis"/>
    <property type="evidence" value="ECO:0000315"/>
    <property type="project" value="UniProtKB"/>
</dbReference>
<dbReference type="GO" id="GO:0006983">
    <property type="term" value="P:ER overload response"/>
    <property type="evidence" value="ECO:0000250"/>
    <property type="project" value="UniProtKB"/>
</dbReference>
<dbReference type="GO" id="GO:0160063">
    <property type="term" value="P:multi-pass transmembrane protein insertion into ER membrane"/>
    <property type="evidence" value="ECO:0000250"/>
    <property type="project" value="UniProtKB"/>
</dbReference>
<dbReference type="GO" id="GO:0001503">
    <property type="term" value="P:ossification"/>
    <property type="evidence" value="ECO:0000315"/>
    <property type="project" value="UniProtKB"/>
</dbReference>
<dbReference type="InterPro" id="IPR002809">
    <property type="entry name" value="EMC3/TMCO1"/>
</dbReference>
<dbReference type="InterPro" id="IPR008559">
    <property type="entry name" value="TMCO1"/>
</dbReference>
<dbReference type="PANTHER" id="PTHR20917:SF0">
    <property type="entry name" value="CALCIUM LOAD-ACTIVATED CALCIUM CHANNEL"/>
    <property type="match status" value="1"/>
</dbReference>
<dbReference type="PANTHER" id="PTHR20917">
    <property type="entry name" value="PNAS-RELATED"/>
    <property type="match status" value="1"/>
</dbReference>
<dbReference type="Pfam" id="PF01956">
    <property type="entry name" value="EMC3_TMCO1"/>
    <property type="match status" value="1"/>
</dbReference>
<dbReference type="PIRSF" id="PIRSF023322">
    <property type="entry name" value="DUF841_euk"/>
    <property type="match status" value="1"/>
</dbReference>
<dbReference type="SMART" id="SM01415">
    <property type="entry name" value="DUF106"/>
    <property type="match status" value="1"/>
</dbReference>
<gene>
    <name evidence="9" type="primary">Tmco1</name>
</gene>
<reference key="1">
    <citation type="journal article" date="2005" name="Science">
        <title>The transcriptional landscape of the mammalian genome.</title>
        <authorList>
            <person name="Carninci P."/>
            <person name="Kasukawa T."/>
            <person name="Katayama S."/>
            <person name="Gough J."/>
            <person name="Frith M.C."/>
            <person name="Maeda N."/>
            <person name="Oyama R."/>
            <person name="Ravasi T."/>
            <person name="Lenhard B."/>
            <person name="Wells C."/>
            <person name="Kodzius R."/>
            <person name="Shimokawa K."/>
            <person name="Bajic V.B."/>
            <person name="Brenner S.E."/>
            <person name="Batalov S."/>
            <person name="Forrest A.R."/>
            <person name="Zavolan M."/>
            <person name="Davis M.J."/>
            <person name="Wilming L.G."/>
            <person name="Aidinis V."/>
            <person name="Allen J.E."/>
            <person name="Ambesi-Impiombato A."/>
            <person name="Apweiler R."/>
            <person name="Aturaliya R.N."/>
            <person name="Bailey T.L."/>
            <person name="Bansal M."/>
            <person name="Baxter L."/>
            <person name="Beisel K.W."/>
            <person name="Bersano T."/>
            <person name="Bono H."/>
            <person name="Chalk A.M."/>
            <person name="Chiu K.P."/>
            <person name="Choudhary V."/>
            <person name="Christoffels A."/>
            <person name="Clutterbuck D.R."/>
            <person name="Crowe M.L."/>
            <person name="Dalla E."/>
            <person name="Dalrymple B.P."/>
            <person name="de Bono B."/>
            <person name="Della Gatta G."/>
            <person name="di Bernardo D."/>
            <person name="Down T."/>
            <person name="Engstrom P."/>
            <person name="Fagiolini M."/>
            <person name="Faulkner G."/>
            <person name="Fletcher C.F."/>
            <person name="Fukushima T."/>
            <person name="Furuno M."/>
            <person name="Futaki S."/>
            <person name="Gariboldi M."/>
            <person name="Georgii-Hemming P."/>
            <person name="Gingeras T.R."/>
            <person name="Gojobori T."/>
            <person name="Green R.E."/>
            <person name="Gustincich S."/>
            <person name="Harbers M."/>
            <person name="Hayashi Y."/>
            <person name="Hensch T.K."/>
            <person name="Hirokawa N."/>
            <person name="Hill D."/>
            <person name="Huminiecki L."/>
            <person name="Iacono M."/>
            <person name="Ikeo K."/>
            <person name="Iwama A."/>
            <person name="Ishikawa T."/>
            <person name="Jakt M."/>
            <person name="Kanapin A."/>
            <person name="Katoh M."/>
            <person name="Kawasawa Y."/>
            <person name="Kelso J."/>
            <person name="Kitamura H."/>
            <person name="Kitano H."/>
            <person name="Kollias G."/>
            <person name="Krishnan S.P."/>
            <person name="Kruger A."/>
            <person name="Kummerfeld S.K."/>
            <person name="Kurochkin I.V."/>
            <person name="Lareau L.F."/>
            <person name="Lazarevic D."/>
            <person name="Lipovich L."/>
            <person name="Liu J."/>
            <person name="Liuni S."/>
            <person name="McWilliam S."/>
            <person name="Madan Babu M."/>
            <person name="Madera M."/>
            <person name="Marchionni L."/>
            <person name="Matsuda H."/>
            <person name="Matsuzawa S."/>
            <person name="Miki H."/>
            <person name="Mignone F."/>
            <person name="Miyake S."/>
            <person name="Morris K."/>
            <person name="Mottagui-Tabar S."/>
            <person name="Mulder N."/>
            <person name="Nakano N."/>
            <person name="Nakauchi H."/>
            <person name="Ng P."/>
            <person name="Nilsson R."/>
            <person name="Nishiguchi S."/>
            <person name="Nishikawa S."/>
            <person name="Nori F."/>
            <person name="Ohara O."/>
            <person name="Okazaki Y."/>
            <person name="Orlando V."/>
            <person name="Pang K.C."/>
            <person name="Pavan W.J."/>
            <person name="Pavesi G."/>
            <person name="Pesole G."/>
            <person name="Petrovsky N."/>
            <person name="Piazza S."/>
            <person name="Reed J."/>
            <person name="Reid J.F."/>
            <person name="Ring B.Z."/>
            <person name="Ringwald M."/>
            <person name="Rost B."/>
            <person name="Ruan Y."/>
            <person name="Salzberg S.L."/>
            <person name="Sandelin A."/>
            <person name="Schneider C."/>
            <person name="Schoenbach C."/>
            <person name="Sekiguchi K."/>
            <person name="Semple C.A."/>
            <person name="Seno S."/>
            <person name="Sessa L."/>
            <person name="Sheng Y."/>
            <person name="Shibata Y."/>
            <person name="Shimada H."/>
            <person name="Shimada K."/>
            <person name="Silva D."/>
            <person name="Sinclair B."/>
            <person name="Sperling S."/>
            <person name="Stupka E."/>
            <person name="Sugiura K."/>
            <person name="Sultana R."/>
            <person name="Takenaka Y."/>
            <person name="Taki K."/>
            <person name="Tammoja K."/>
            <person name="Tan S.L."/>
            <person name="Tang S."/>
            <person name="Taylor M.S."/>
            <person name="Tegner J."/>
            <person name="Teichmann S.A."/>
            <person name="Ueda H.R."/>
            <person name="van Nimwegen E."/>
            <person name="Verardo R."/>
            <person name="Wei C.L."/>
            <person name="Yagi K."/>
            <person name="Yamanishi H."/>
            <person name="Zabarovsky E."/>
            <person name="Zhu S."/>
            <person name="Zimmer A."/>
            <person name="Hide W."/>
            <person name="Bult C."/>
            <person name="Grimmond S.M."/>
            <person name="Teasdale R.D."/>
            <person name="Liu E.T."/>
            <person name="Brusic V."/>
            <person name="Quackenbush J."/>
            <person name="Wahlestedt C."/>
            <person name="Mattick J.S."/>
            <person name="Hume D.A."/>
            <person name="Kai C."/>
            <person name="Sasaki D."/>
            <person name="Tomaru Y."/>
            <person name="Fukuda S."/>
            <person name="Kanamori-Katayama M."/>
            <person name="Suzuki M."/>
            <person name="Aoki J."/>
            <person name="Arakawa T."/>
            <person name="Iida J."/>
            <person name="Imamura K."/>
            <person name="Itoh M."/>
            <person name="Kato T."/>
            <person name="Kawaji H."/>
            <person name="Kawagashira N."/>
            <person name="Kawashima T."/>
            <person name="Kojima M."/>
            <person name="Kondo S."/>
            <person name="Konno H."/>
            <person name="Nakano K."/>
            <person name="Ninomiya N."/>
            <person name="Nishio T."/>
            <person name="Okada M."/>
            <person name="Plessy C."/>
            <person name="Shibata K."/>
            <person name="Shiraki T."/>
            <person name="Suzuki S."/>
            <person name="Tagami M."/>
            <person name="Waki K."/>
            <person name="Watahiki A."/>
            <person name="Okamura-Oho Y."/>
            <person name="Suzuki H."/>
            <person name="Kawai J."/>
            <person name="Hayashizaki Y."/>
        </authorList>
    </citation>
    <scope>NUCLEOTIDE SEQUENCE [LARGE SCALE MRNA]</scope>
    <source>
        <strain>C57BL/6J</strain>
        <tissue>Epididymis</tissue>
        <tissue>Thymus</tissue>
    </source>
</reference>
<reference key="2">
    <citation type="journal article" date="2004" name="Genome Res.">
        <title>The status, quality, and expansion of the NIH full-length cDNA project: the Mammalian Gene Collection (MGC).</title>
        <authorList>
            <consortium name="The MGC Project Team"/>
        </authorList>
    </citation>
    <scope>NUCLEOTIDE SEQUENCE [LARGE SCALE MRNA]</scope>
    <source>
        <strain>Czech II</strain>
        <strain>FVB/N</strain>
        <strain>FVB/N-3</strain>
        <tissue>Mammary tumor</tissue>
    </source>
</reference>
<reference key="3">
    <citation type="journal article" date="2010" name="Cell">
        <title>A tissue-specific atlas of mouse protein phosphorylation and expression.</title>
        <authorList>
            <person name="Huttlin E.L."/>
            <person name="Jedrychowski M.P."/>
            <person name="Elias J.E."/>
            <person name="Goswami T."/>
            <person name="Rad R."/>
            <person name="Beausoleil S.A."/>
            <person name="Villen J."/>
            <person name="Haas W."/>
            <person name="Sowa M.E."/>
            <person name="Gygi S.P."/>
        </authorList>
    </citation>
    <scope>IDENTIFICATION BY MASS SPECTROMETRY [LARGE SCALE ANALYSIS]</scope>
    <source>
        <tissue>Brown adipose tissue</tissue>
        <tissue>Heart</tissue>
        <tissue>Kidney</tissue>
        <tissue>Liver</tissue>
        <tissue>Lung</tissue>
        <tissue>Pancreas</tissue>
        <tissue>Spleen</tissue>
        <tissue>Testis</tissue>
    </source>
</reference>
<reference key="4">
    <citation type="journal article" date="2016" name="Cell">
        <title>TMCO1 is an ER Ca(2+) load-activated Ca(2+) channel.</title>
        <authorList>
            <person name="Wang Q.C."/>
            <person name="Zheng Q."/>
            <person name="Tan H."/>
            <person name="Zhang B."/>
            <person name="Li X."/>
            <person name="Yang Y."/>
            <person name="Yu J."/>
            <person name="Liu Y."/>
            <person name="Chai H."/>
            <person name="Wang X."/>
            <person name="Sun Z."/>
            <person name="Wang J.Q."/>
            <person name="Zhu S."/>
            <person name="Wang F."/>
            <person name="Yang M."/>
            <person name="Guo C."/>
            <person name="Wang H."/>
            <person name="Zheng Q."/>
            <person name="Li Y."/>
            <person name="Chen Q."/>
            <person name="Zhou A."/>
            <person name="Tang T.S."/>
        </authorList>
    </citation>
    <scope>FUNCTION</scope>
    <scope>TRANSPORTER ACTIVITY</scope>
    <scope>DISRUPTION PHENOTYPE</scope>
</reference>
<reference key="5">
    <citation type="journal article" date="2018" name="Cell Death Differ.">
        <title>TMCO1 is essential for ovarian follicle development by regulating ER Ca2+ store of granulosa cells.</title>
        <authorList>
            <person name="Sun Z."/>
            <person name="Zhang H."/>
            <person name="Wang X."/>
            <person name="Wang Q.C."/>
            <person name="Zhang C."/>
            <person name="Wang J.Q."/>
            <person name="Wang Y.H."/>
            <person name="An C.Q."/>
            <person name="Yang K.Y."/>
            <person name="Wang Y."/>
            <person name="Gao F."/>
            <person name="Guo C."/>
            <person name="Tang T.S."/>
        </authorList>
    </citation>
    <scope>FUNCTION</scope>
    <scope>DISRUPTION PHENOTYPE</scope>
</reference>
<reference key="6">
    <citation type="journal article" date="2019" name="Nat. Commun.">
        <title>TMCO1-mediated Ca2+ leak underlies osteoblast functions via CaMKII signaling.</title>
        <authorList>
            <person name="Li J."/>
            <person name="Liu C."/>
            <person name="Li Y."/>
            <person name="Zheng Q."/>
            <person name="Xu Y."/>
            <person name="Liu B."/>
            <person name="Sun W."/>
            <person name="Li Y."/>
            <person name="Ji S."/>
            <person name="Liu M."/>
            <person name="Zhang J."/>
            <person name="Zhao D."/>
            <person name="Du R."/>
            <person name="Liu Z."/>
            <person name="Zhong G."/>
            <person name="Sun C."/>
            <person name="Wang Y."/>
            <person name="Song J."/>
            <person name="Zhang S."/>
            <person name="Qin J."/>
            <person name="Ling S."/>
            <person name="Wang X."/>
            <person name="Li Y."/>
        </authorList>
    </citation>
    <scope>FUNCTION</scope>
    <scope>DISRUPTION PHENOTYPE</scope>
</reference>
<comment type="function">
    <text evidence="3 5 6 7">Endoplasmic reticulum (ER) calcium-selective channel preventing intracellular Ca2(+) stores from overfilling and maintaining calcium homeostasis in the ER. In response to endoplasmic reticulum (ER) Ca2(+) overloading, assembles into a homotetramer, forming a functional calcium-selective channel facilitating Ca2(+) release (PubMed:27212239, PubMed:29467381, PubMed:30962442). Mediates ER Ca2(+) homeostasis in osteoblasts and plays a key role in bone formation, via the CaMKII-HDAC4-RUNX2 signaling axis (PubMed:30962442). Component of the multi-pass translocon (MPT) complex that mediates insertion of multi-pass membrane proteins into the lipid bilayer of membranes (By similarity). The MPT complex takes over after the SEC61 complex: following membrane insertion of the first few transmembrane segments of proteins by the SEC61 complex, the MPT complex occludes the lateral gate of the SEC61 complex to promote insertion of subsequent transmembrane regions (By similarity). Within the MPT complex, the GEL subcomplex may mediate insertion of transmembrane regions into the membrane (By similarity).</text>
</comment>
<comment type="catalytic activity">
    <reaction evidence="5">
        <text>Ca(2+)(in) = Ca(2+)(out)</text>
        <dbReference type="Rhea" id="RHEA:29671"/>
        <dbReference type="ChEBI" id="CHEBI:29108"/>
    </reaction>
</comment>
<comment type="subunit">
    <text evidence="3">Homodimer and homotetramer. Homodimer under resting conditions; forms homotetramers following ER calcium overload. Component of the GET- and EMC-like (GEL) complex, composed of RAB5IF/OPTI and TMCO1. The GEL complex is part of the multi-pass translocon (MPT) complex, composed of three subcomplexes, the GEL complex (composed of RAB5IF/OPTI and TMCO1), the BOS complex (composed of NCLN/Nicalin, NOMO1 and TMEM147) and the PAT complex (composed of WDR83OS/Asterix and CCDC47). The MPT complex associates with the SEC61 complex.</text>
</comment>
<comment type="subcellular location">
    <subcellularLocation>
        <location evidence="3">Endoplasmic reticulum membrane</location>
        <topology evidence="3">Multi-pass membrane protein</topology>
    </subcellularLocation>
    <subcellularLocation>
        <location evidence="3">Golgi apparatus membrane</location>
        <topology evidence="3">Multi-pass membrane protein</topology>
    </subcellularLocation>
    <subcellularLocation>
        <location evidence="2">Mitochondrion membrane</location>
        <topology evidence="3">Multi-pass membrane protein</topology>
    </subcellularLocation>
    <text evidence="3">The first transmembrane region is required for localization to the endoplasmic reticulum.</text>
</comment>
<comment type="disruption phenotype">
    <text evidence="5 6">Mice are born at a much lower rate than predicted by the Mendelian ratio. Surviving mice show a reduced body size, low survival rate and delayed osteogenesis. Adult mice display craniofacial dysmorphism such as open cranial sutures, flattened faces with shorten nasal bones and skull anomalies. Moreover, magnetic resonance imaging (MRI) of brain shows significantly enlarged brain ventricles. Adult mice show defects in spatial recognition memory in a Y-maze task assay and a significant deficiency in motor coordination in rotarod assessments. Defects are probably due to calcium overload, calcium imaging results revealing a significant overload of endoplasmic reticulum calcium in osteoblasts (PubMed:27212239, PubMed:29467381). Additionally female Tmco1-/- mice show impaired follicle development, subfertility, and premature ovarian failure (PubMed:29467381).</text>
</comment>
<comment type="similarity">
    <text evidence="8">Belongs to the TMCO1 family.</text>
</comment>
<accession>Q921L3</accession>
<accession>Q3TS11</accession>